<keyword id="KW-0963">Cytoplasm</keyword>
<keyword id="KW-0489">Methyltransferase</keyword>
<keyword id="KW-0949">S-adenosyl-L-methionine</keyword>
<keyword id="KW-0808">Transferase</keyword>
<comment type="function">
    <text evidence="1">Methylates ribosomal protein L11.</text>
</comment>
<comment type="catalytic activity">
    <reaction evidence="1">
        <text>L-lysyl-[protein] + 3 S-adenosyl-L-methionine = N(6),N(6),N(6)-trimethyl-L-lysyl-[protein] + 3 S-adenosyl-L-homocysteine + 3 H(+)</text>
        <dbReference type="Rhea" id="RHEA:54192"/>
        <dbReference type="Rhea" id="RHEA-COMP:9752"/>
        <dbReference type="Rhea" id="RHEA-COMP:13826"/>
        <dbReference type="ChEBI" id="CHEBI:15378"/>
        <dbReference type="ChEBI" id="CHEBI:29969"/>
        <dbReference type="ChEBI" id="CHEBI:57856"/>
        <dbReference type="ChEBI" id="CHEBI:59789"/>
        <dbReference type="ChEBI" id="CHEBI:61961"/>
    </reaction>
</comment>
<comment type="subcellular location">
    <subcellularLocation>
        <location evidence="1">Cytoplasm</location>
    </subcellularLocation>
</comment>
<comment type="similarity">
    <text evidence="1">Belongs to the methyltransferase superfamily. PrmA family.</text>
</comment>
<proteinExistence type="inferred from homology"/>
<evidence type="ECO:0000255" key="1">
    <source>
        <dbReference type="HAMAP-Rule" id="MF_00735"/>
    </source>
</evidence>
<reference key="1">
    <citation type="journal article" date="2004" name="Nat. Genet.">
        <title>Evidence in the Legionella pneumophila genome for exploitation of host cell functions and high genome plasticity.</title>
        <authorList>
            <person name="Cazalet C."/>
            <person name="Rusniok C."/>
            <person name="Brueggemann H."/>
            <person name="Zidane N."/>
            <person name="Magnier A."/>
            <person name="Ma L."/>
            <person name="Tichit M."/>
            <person name="Jarraud S."/>
            <person name="Bouchier C."/>
            <person name="Vandenesch F."/>
            <person name="Kunst F."/>
            <person name="Etienne J."/>
            <person name="Glaser P."/>
            <person name="Buchrieser C."/>
        </authorList>
    </citation>
    <scope>NUCLEOTIDE SEQUENCE [LARGE SCALE GENOMIC DNA]</scope>
    <source>
        <strain>Paris</strain>
    </source>
</reference>
<feature type="chain" id="PRO_0000192272" description="Ribosomal protein L11 methyltransferase">
    <location>
        <begin position="1"/>
        <end position="289"/>
    </location>
</feature>
<feature type="binding site" evidence="1">
    <location>
        <position position="142"/>
    </location>
    <ligand>
        <name>S-adenosyl-L-methionine</name>
        <dbReference type="ChEBI" id="CHEBI:59789"/>
    </ligand>
</feature>
<feature type="binding site" evidence="1">
    <location>
        <position position="163"/>
    </location>
    <ligand>
        <name>S-adenosyl-L-methionine</name>
        <dbReference type="ChEBI" id="CHEBI:59789"/>
    </ligand>
</feature>
<feature type="binding site" evidence="1">
    <location>
        <position position="185"/>
    </location>
    <ligand>
        <name>S-adenosyl-L-methionine</name>
        <dbReference type="ChEBI" id="CHEBI:59789"/>
    </ligand>
</feature>
<feature type="binding site" evidence="1">
    <location>
        <position position="226"/>
    </location>
    <ligand>
        <name>S-adenosyl-L-methionine</name>
        <dbReference type="ChEBI" id="CHEBI:59789"/>
    </ligand>
</feature>
<sequence>MWFQLKIEHCPNDKIEEITEELEEYGALSITLTDKNDNPVLEPEPGTTPLWPEVIIHALFAQAEEAQYVREQLVAKRPSLHCSLELLADKNWERAWMDDFRPQRFGNRLWVCPTWLPPPEPDAVNLMLDPGLAFGTGTHATTSLCLTWLEQADLKNKSIIDYGCGSGILSLAAIKLGAKHVYAVDIDNQALQATQSNAHANHITESQLSISTPEALQNPVHLIIANILLAPLISLKERFHQLLPSGAHLVTSGILEEQAPLLIDAYDSAFTHIATEYCEGWSLLVFTSK</sequence>
<name>PRMA_LEGPA</name>
<gene>
    <name evidence="1" type="primary">prmA</name>
    <name type="ordered locus">lpp0527</name>
</gene>
<dbReference type="EC" id="2.1.1.-" evidence="1"/>
<dbReference type="EMBL" id="CR628336">
    <property type="protein sequence ID" value="CAH11675.1"/>
    <property type="molecule type" value="Genomic_DNA"/>
</dbReference>
<dbReference type="RefSeq" id="WP_011213100.1">
    <property type="nucleotide sequence ID" value="NC_006368.1"/>
</dbReference>
<dbReference type="SMR" id="Q5X7S8"/>
<dbReference type="KEGG" id="lpp:lpp0527"/>
<dbReference type="LegioList" id="lpp0527"/>
<dbReference type="HOGENOM" id="CLU_049382_4_1_6"/>
<dbReference type="GO" id="GO:0005829">
    <property type="term" value="C:cytosol"/>
    <property type="evidence" value="ECO:0007669"/>
    <property type="project" value="TreeGrafter"/>
</dbReference>
<dbReference type="GO" id="GO:0016279">
    <property type="term" value="F:protein-lysine N-methyltransferase activity"/>
    <property type="evidence" value="ECO:0007669"/>
    <property type="project" value="TreeGrafter"/>
</dbReference>
<dbReference type="GO" id="GO:0032259">
    <property type="term" value="P:methylation"/>
    <property type="evidence" value="ECO:0007669"/>
    <property type="project" value="UniProtKB-KW"/>
</dbReference>
<dbReference type="CDD" id="cd02440">
    <property type="entry name" value="AdoMet_MTases"/>
    <property type="match status" value="1"/>
</dbReference>
<dbReference type="Gene3D" id="3.40.50.150">
    <property type="entry name" value="Vaccinia Virus protein VP39"/>
    <property type="match status" value="1"/>
</dbReference>
<dbReference type="HAMAP" id="MF_00735">
    <property type="entry name" value="Methyltr_PrmA"/>
    <property type="match status" value="1"/>
</dbReference>
<dbReference type="InterPro" id="IPR050078">
    <property type="entry name" value="Ribosomal_L11_MeTrfase_PrmA"/>
</dbReference>
<dbReference type="InterPro" id="IPR004498">
    <property type="entry name" value="Ribosomal_PrmA_MeTrfase"/>
</dbReference>
<dbReference type="InterPro" id="IPR029063">
    <property type="entry name" value="SAM-dependent_MTases_sf"/>
</dbReference>
<dbReference type="NCBIfam" id="TIGR00406">
    <property type="entry name" value="prmA"/>
    <property type="match status" value="1"/>
</dbReference>
<dbReference type="PANTHER" id="PTHR43648">
    <property type="entry name" value="ELECTRON TRANSFER FLAVOPROTEIN BETA SUBUNIT LYSINE METHYLTRANSFERASE"/>
    <property type="match status" value="1"/>
</dbReference>
<dbReference type="PANTHER" id="PTHR43648:SF1">
    <property type="entry name" value="ELECTRON TRANSFER FLAVOPROTEIN BETA SUBUNIT LYSINE METHYLTRANSFERASE"/>
    <property type="match status" value="1"/>
</dbReference>
<dbReference type="Pfam" id="PF06325">
    <property type="entry name" value="PrmA"/>
    <property type="match status" value="1"/>
</dbReference>
<dbReference type="PIRSF" id="PIRSF000401">
    <property type="entry name" value="RPL11_MTase"/>
    <property type="match status" value="1"/>
</dbReference>
<dbReference type="SUPFAM" id="SSF53335">
    <property type="entry name" value="S-adenosyl-L-methionine-dependent methyltransferases"/>
    <property type="match status" value="1"/>
</dbReference>
<protein>
    <recommendedName>
        <fullName evidence="1">Ribosomal protein L11 methyltransferase</fullName>
        <shortName evidence="1">L11 Mtase</shortName>
        <ecNumber evidence="1">2.1.1.-</ecNumber>
    </recommendedName>
</protein>
<organism>
    <name type="scientific">Legionella pneumophila (strain Paris)</name>
    <dbReference type="NCBI Taxonomy" id="297246"/>
    <lineage>
        <taxon>Bacteria</taxon>
        <taxon>Pseudomonadati</taxon>
        <taxon>Pseudomonadota</taxon>
        <taxon>Gammaproteobacteria</taxon>
        <taxon>Legionellales</taxon>
        <taxon>Legionellaceae</taxon>
        <taxon>Legionella</taxon>
    </lineage>
</organism>
<accession>Q5X7S8</accession>